<name>METN_CHLPN</name>
<feature type="chain" id="PRO_0000270278" description="Methionine import ATP-binding protein MetN">
    <location>
        <begin position="1"/>
        <end position="341"/>
    </location>
</feature>
<feature type="domain" description="ABC transporter" evidence="1">
    <location>
        <begin position="9"/>
        <end position="247"/>
    </location>
</feature>
<feature type="binding site" evidence="1">
    <location>
        <begin position="41"/>
        <end position="48"/>
    </location>
    <ligand>
        <name>ATP</name>
        <dbReference type="ChEBI" id="CHEBI:30616"/>
    </ligand>
</feature>
<feature type="sequence variant" description="In strain: TW-183.">
    <original>K</original>
    <variation>N</variation>
    <location>
        <position position="87"/>
    </location>
</feature>
<gene>
    <name evidence="1" type="primary">metN</name>
    <name type="ordered locus">CPn_0280</name>
    <name type="ordered locus">CP_0478</name>
    <name type="ordered locus">CpB0288</name>
</gene>
<reference key="1">
    <citation type="journal article" date="1999" name="Nat. Genet.">
        <title>Comparative genomes of Chlamydia pneumoniae and C. trachomatis.</title>
        <authorList>
            <person name="Kalman S."/>
            <person name="Mitchell W.P."/>
            <person name="Marathe R."/>
            <person name="Lammel C.J."/>
            <person name="Fan J."/>
            <person name="Hyman R.W."/>
            <person name="Olinger L."/>
            <person name="Grimwood J."/>
            <person name="Davis R.W."/>
            <person name="Stephens R.S."/>
        </authorList>
    </citation>
    <scope>NUCLEOTIDE SEQUENCE [LARGE SCALE GENOMIC DNA]</scope>
    <source>
        <strain>CWL029</strain>
    </source>
</reference>
<reference key="2">
    <citation type="journal article" date="2000" name="Nucleic Acids Res.">
        <title>Comparison of whole genome sequences of Chlamydia pneumoniae J138 from Japan and CWL029 from USA.</title>
        <authorList>
            <person name="Shirai M."/>
            <person name="Hirakawa H."/>
            <person name="Kimoto M."/>
            <person name="Tabuchi M."/>
            <person name="Kishi F."/>
            <person name="Ouchi K."/>
            <person name="Shiba T."/>
            <person name="Ishii K."/>
            <person name="Hattori M."/>
            <person name="Kuhara S."/>
            <person name="Nakazawa T."/>
        </authorList>
    </citation>
    <scope>NUCLEOTIDE SEQUENCE [LARGE SCALE GENOMIC DNA]</scope>
    <source>
        <strain>J138</strain>
    </source>
</reference>
<reference key="3">
    <citation type="journal article" date="2000" name="Nucleic Acids Res.">
        <title>Genome sequences of Chlamydia trachomatis MoPn and Chlamydia pneumoniae AR39.</title>
        <authorList>
            <person name="Read T.D."/>
            <person name="Brunham R.C."/>
            <person name="Shen C."/>
            <person name="Gill S.R."/>
            <person name="Heidelberg J.F."/>
            <person name="White O."/>
            <person name="Hickey E.K."/>
            <person name="Peterson J.D."/>
            <person name="Utterback T.R."/>
            <person name="Berry K.J."/>
            <person name="Bass S."/>
            <person name="Linher K.D."/>
            <person name="Weidman J.F."/>
            <person name="Khouri H.M."/>
            <person name="Craven B."/>
            <person name="Bowman C."/>
            <person name="Dodson R.J."/>
            <person name="Gwinn M.L."/>
            <person name="Nelson W.C."/>
            <person name="DeBoy R.T."/>
            <person name="Kolonay J.F."/>
            <person name="McClarty G."/>
            <person name="Salzberg S.L."/>
            <person name="Eisen J.A."/>
            <person name="Fraser C.M."/>
        </authorList>
    </citation>
    <scope>NUCLEOTIDE SEQUENCE [LARGE SCALE GENOMIC DNA]</scope>
    <source>
        <strain>AR39</strain>
    </source>
</reference>
<reference key="4">
    <citation type="submission" date="2002-05" db="EMBL/GenBank/DDBJ databases">
        <title>The genome sequence of Chlamydia pneumoniae TW183 and comparison with other Chlamydia strains based on whole genome sequence analysis.</title>
        <authorList>
            <person name="Geng M.M."/>
            <person name="Schuhmacher A."/>
            <person name="Muehldorfer I."/>
            <person name="Bensch K.W."/>
            <person name="Schaefer K.P."/>
            <person name="Schneider S."/>
            <person name="Pohl T."/>
            <person name="Essig A."/>
            <person name="Marre R."/>
            <person name="Melchers K."/>
        </authorList>
    </citation>
    <scope>NUCLEOTIDE SEQUENCE [LARGE SCALE GENOMIC DNA]</scope>
    <source>
        <strain>TW-183</strain>
    </source>
</reference>
<evidence type="ECO:0000255" key="1">
    <source>
        <dbReference type="HAMAP-Rule" id="MF_01719"/>
    </source>
</evidence>
<organism>
    <name type="scientific">Chlamydia pneumoniae</name>
    <name type="common">Chlamydophila pneumoniae</name>
    <dbReference type="NCBI Taxonomy" id="83558"/>
    <lineage>
        <taxon>Bacteria</taxon>
        <taxon>Pseudomonadati</taxon>
        <taxon>Chlamydiota</taxon>
        <taxon>Chlamydiia</taxon>
        <taxon>Chlamydiales</taxon>
        <taxon>Chlamydiaceae</taxon>
        <taxon>Chlamydia/Chlamydophila group</taxon>
        <taxon>Chlamydia</taxon>
    </lineage>
</organism>
<accession>Q9Z8Q8</accession>
<accession>Q7AJ17</accession>
<accession>Q7DEM8</accession>
<accession>Q7VQ51</accession>
<dbReference type="EC" id="7.4.2.11" evidence="1"/>
<dbReference type="EMBL" id="AE001363">
    <property type="protein sequence ID" value="AAD18429.1"/>
    <property type="molecule type" value="Genomic_DNA"/>
</dbReference>
<dbReference type="EMBL" id="BA000008">
    <property type="protein sequence ID" value="BAA98490.1"/>
    <property type="molecule type" value="Genomic_DNA"/>
</dbReference>
<dbReference type="EMBL" id="AE002161">
    <property type="protein sequence ID" value="AAF73675.1"/>
    <property type="molecule type" value="Genomic_DNA"/>
</dbReference>
<dbReference type="EMBL" id="AE009440">
    <property type="protein sequence ID" value="AAP98221.1"/>
    <property type="molecule type" value="Genomic_DNA"/>
</dbReference>
<dbReference type="PIR" id="B72097">
    <property type="entry name" value="B72097"/>
</dbReference>
<dbReference type="PIR" id="H86525">
    <property type="entry name" value="H86525"/>
</dbReference>
<dbReference type="RefSeq" id="NP_224485.1">
    <property type="nucleotide sequence ID" value="NC_000922.1"/>
</dbReference>
<dbReference type="RefSeq" id="WP_010882928.1">
    <property type="nucleotide sequence ID" value="NZ_LN847257.1"/>
</dbReference>
<dbReference type="SMR" id="Q9Z8Q8"/>
<dbReference type="STRING" id="406984.CPK_ORF00789"/>
<dbReference type="GeneID" id="45050329"/>
<dbReference type="KEGG" id="cpa:CP_0478"/>
<dbReference type="KEGG" id="cpj:dppF_1"/>
<dbReference type="KEGG" id="cpn:CPn_0280"/>
<dbReference type="KEGG" id="cpt:CpB0288"/>
<dbReference type="PATRIC" id="fig|115713.3.peg.314"/>
<dbReference type="eggNOG" id="COG1135">
    <property type="taxonomic scope" value="Bacteria"/>
</dbReference>
<dbReference type="HOGENOM" id="CLU_000604_1_3_0"/>
<dbReference type="OrthoDB" id="9804199at2"/>
<dbReference type="Proteomes" id="UP000000583">
    <property type="component" value="Chromosome"/>
</dbReference>
<dbReference type="Proteomes" id="UP000000801">
    <property type="component" value="Chromosome"/>
</dbReference>
<dbReference type="GO" id="GO:0005886">
    <property type="term" value="C:plasma membrane"/>
    <property type="evidence" value="ECO:0007669"/>
    <property type="project" value="UniProtKB-SubCell"/>
</dbReference>
<dbReference type="GO" id="GO:0033232">
    <property type="term" value="F:ABC-type D-methionine transporter activity"/>
    <property type="evidence" value="ECO:0007669"/>
    <property type="project" value="UniProtKB-EC"/>
</dbReference>
<dbReference type="GO" id="GO:0005524">
    <property type="term" value="F:ATP binding"/>
    <property type="evidence" value="ECO:0007669"/>
    <property type="project" value="UniProtKB-KW"/>
</dbReference>
<dbReference type="GO" id="GO:0016887">
    <property type="term" value="F:ATP hydrolysis activity"/>
    <property type="evidence" value="ECO:0007669"/>
    <property type="project" value="InterPro"/>
</dbReference>
<dbReference type="CDD" id="cd03258">
    <property type="entry name" value="ABC_MetN_methionine_transporter"/>
    <property type="match status" value="1"/>
</dbReference>
<dbReference type="Gene3D" id="3.30.70.260">
    <property type="match status" value="1"/>
</dbReference>
<dbReference type="Gene3D" id="3.40.50.300">
    <property type="entry name" value="P-loop containing nucleotide triphosphate hydrolases"/>
    <property type="match status" value="1"/>
</dbReference>
<dbReference type="InterPro" id="IPR003593">
    <property type="entry name" value="AAA+_ATPase"/>
</dbReference>
<dbReference type="InterPro" id="IPR003439">
    <property type="entry name" value="ABC_transporter-like_ATP-bd"/>
</dbReference>
<dbReference type="InterPro" id="IPR017871">
    <property type="entry name" value="ABC_transporter-like_CS"/>
</dbReference>
<dbReference type="InterPro" id="IPR045865">
    <property type="entry name" value="ACT-like_dom_sf"/>
</dbReference>
<dbReference type="InterPro" id="IPR041701">
    <property type="entry name" value="MetN_ABC"/>
</dbReference>
<dbReference type="InterPro" id="IPR050086">
    <property type="entry name" value="MetN_ABC_transporter-like"/>
</dbReference>
<dbReference type="InterPro" id="IPR018449">
    <property type="entry name" value="NIL_domain"/>
</dbReference>
<dbReference type="InterPro" id="IPR027417">
    <property type="entry name" value="P-loop_NTPase"/>
</dbReference>
<dbReference type="PANTHER" id="PTHR43166">
    <property type="entry name" value="AMINO ACID IMPORT ATP-BINDING PROTEIN"/>
    <property type="match status" value="1"/>
</dbReference>
<dbReference type="PANTHER" id="PTHR43166:SF30">
    <property type="entry name" value="METHIONINE IMPORT ATP-BINDING PROTEIN METN"/>
    <property type="match status" value="1"/>
</dbReference>
<dbReference type="Pfam" id="PF00005">
    <property type="entry name" value="ABC_tran"/>
    <property type="match status" value="1"/>
</dbReference>
<dbReference type="Pfam" id="PF09383">
    <property type="entry name" value="NIL"/>
    <property type="match status" value="1"/>
</dbReference>
<dbReference type="SMART" id="SM00382">
    <property type="entry name" value="AAA"/>
    <property type="match status" value="1"/>
</dbReference>
<dbReference type="SMART" id="SM00930">
    <property type="entry name" value="NIL"/>
    <property type="match status" value="1"/>
</dbReference>
<dbReference type="SUPFAM" id="SSF55021">
    <property type="entry name" value="ACT-like"/>
    <property type="match status" value="1"/>
</dbReference>
<dbReference type="SUPFAM" id="SSF52540">
    <property type="entry name" value="P-loop containing nucleoside triphosphate hydrolases"/>
    <property type="match status" value="1"/>
</dbReference>
<dbReference type="PROSITE" id="PS00211">
    <property type="entry name" value="ABC_TRANSPORTER_1"/>
    <property type="match status" value="1"/>
</dbReference>
<dbReference type="PROSITE" id="PS50893">
    <property type="entry name" value="ABC_TRANSPORTER_2"/>
    <property type="match status" value="1"/>
</dbReference>
<dbReference type="PROSITE" id="PS51264">
    <property type="entry name" value="METN"/>
    <property type="match status" value="1"/>
</dbReference>
<comment type="function">
    <text evidence="1">Part of the ABC transporter complex MetNIQ involved in methionine import. Responsible for energy coupling to the transport system.</text>
</comment>
<comment type="catalytic activity">
    <reaction evidence="1">
        <text>L-methionine(out) + ATP + H2O = L-methionine(in) + ADP + phosphate + H(+)</text>
        <dbReference type="Rhea" id="RHEA:29779"/>
        <dbReference type="ChEBI" id="CHEBI:15377"/>
        <dbReference type="ChEBI" id="CHEBI:15378"/>
        <dbReference type="ChEBI" id="CHEBI:30616"/>
        <dbReference type="ChEBI" id="CHEBI:43474"/>
        <dbReference type="ChEBI" id="CHEBI:57844"/>
        <dbReference type="ChEBI" id="CHEBI:456216"/>
        <dbReference type="EC" id="7.4.2.11"/>
    </reaction>
</comment>
<comment type="catalytic activity">
    <reaction evidence="1">
        <text>D-methionine(out) + ATP + H2O = D-methionine(in) + ADP + phosphate + H(+)</text>
        <dbReference type="Rhea" id="RHEA:29767"/>
        <dbReference type="ChEBI" id="CHEBI:15377"/>
        <dbReference type="ChEBI" id="CHEBI:15378"/>
        <dbReference type="ChEBI" id="CHEBI:30616"/>
        <dbReference type="ChEBI" id="CHEBI:43474"/>
        <dbReference type="ChEBI" id="CHEBI:57932"/>
        <dbReference type="ChEBI" id="CHEBI:456216"/>
        <dbReference type="EC" id="7.4.2.11"/>
    </reaction>
</comment>
<comment type="subunit">
    <text evidence="1">The complex is composed of two ATP-binding proteins (MetN), two transmembrane proteins (MetI) and a solute-binding protein (MetQ).</text>
</comment>
<comment type="subcellular location">
    <subcellularLocation>
        <location evidence="1">Cell inner membrane</location>
        <topology evidence="1">Peripheral membrane protein</topology>
    </subcellularLocation>
</comment>
<comment type="similarity">
    <text evidence="1">Belongs to the ABC transporter superfamily. Methionine importer (TC 3.A.1.24) family.</text>
</comment>
<keyword id="KW-0029">Amino-acid transport</keyword>
<keyword id="KW-0067">ATP-binding</keyword>
<keyword id="KW-0997">Cell inner membrane</keyword>
<keyword id="KW-1003">Cell membrane</keyword>
<keyword id="KW-0472">Membrane</keyword>
<keyword id="KW-0547">Nucleotide-binding</keyword>
<keyword id="KW-1278">Translocase</keyword>
<keyword id="KW-0813">Transport</keyword>
<sequence>MSEQHSPIISVQDVSKKLGDHILLSKVSFSVYPGEVFGIVGHSGSGKTTLLRCLDFLDMPTSGSISVAGFDNSLPTQKFSRRNFSKKVAYISQNYGLFSSKTVFENIAYPLRIHHSEMSKSEVEEQVYDTLNFLNLYHRHDAYPGNLSGGQKQKVAIARAIVCQPEVVLCDEITSALDPKSTENIIERLLQLNQERGITLVLVSHEIDVVKKICSHVLVMHQGAVEELGTTEELFLNSENSITNELFHEDINIAALSSCYFAEDREEVLRLNFSKELAIQGIISKVIQTGLVSINILSGNINLFRKSPMGFLIIVLEGEVEQRKKAKELLIELGVVIKEFY</sequence>
<proteinExistence type="inferred from homology"/>
<protein>
    <recommendedName>
        <fullName evidence="1">Methionine import ATP-binding protein MetN</fullName>
        <ecNumber evidence="1">7.4.2.11</ecNumber>
    </recommendedName>
</protein>